<protein>
    <recommendedName>
        <fullName evidence="1">4-hydroxy-tetrahydrodipicolinate synthase</fullName>
        <shortName evidence="1">HTPA synthase</shortName>
        <ecNumber evidence="1">4.3.3.7</ecNumber>
    </recommendedName>
</protein>
<proteinExistence type="inferred from homology"/>
<sequence length="311" mass="33894">MSYQDLKECKIITAFITPFHEDGSINFDAIPALIEHLLDHHTDGILLAGTTAESPTLTHDEELELFAAVQKIVNGRVPLIAGVGTNDTRDSIEFVKEVAEFGGFAAGLAIVPYYNKPSQEGMYQHFKAIADASDLPIIIYNIPGRVVVELTPETMLRLADHPNIIGVKECTSLANMAYLIEHKPEEFLVYTGEDGDAFHAMNLGADGVISVASHTNGDEMHEMFIAIAESDVKKAAAIQRKFIPKVNALFSYPSPAPVKAVLNYMGFEAGPTRLPLVPAPEEDAKRIIKVVVDGDYEATKATVTGVLRPDY</sequence>
<organism>
    <name type="scientific">Streptococcus pneumoniae (strain ATCC BAA-255 / R6)</name>
    <dbReference type="NCBI Taxonomy" id="171101"/>
    <lineage>
        <taxon>Bacteria</taxon>
        <taxon>Bacillati</taxon>
        <taxon>Bacillota</taxon>
        <taxon>Bacilli</taxon>
        <taxon>Lactobacillales</taxon>
        <taxon>Streptococcaceae</taxon>
        <taxon>Streptococcus</taxon>
    </lineage>
</organism>
<accession>Q8DPZ9</accession>
<dbReference type="EC" id="4.3.3.7" evidence="1"/>
<dbReference type="EMBL" id="AE007317">
    <property type="protein sequence ID" value="AAK99723.1"/>
    <property type="molecule type" value="Genomic_DNA"/>
</dbReference>
<dbReference type="PIR" id="G97986">
    <property type="entry name" value="G97986"/>
</dbReference>
<dbReference type="RefSeq" id="NP_358513.1">
    <property type="nucleotide sequence ID" value="NC_003098.1"/>
</dbReference>
<dbReference type="RefSeq" id="WP_000121636.1">
    <property type="nucleotide sequence ID" value="NC_003098.1"/>
</dbReference>
<dbReference type="SMR" id="Q8DPZ9"/>
<dbReference type="STRING" id="171101.spr0919"/>
<dbReference type="KEGG" id="spr:spr0919"/>
<dbReference type="PATRIC" id="fig|171101.6.peg.1006"/>
<dbReference type="eggNOG" id="COG0329">
    <property type="taxonomic scope" value="Bacteria"/>
</dbReference>
<dbReference type="HOGENOM" id="CLU_049343_7_1_9"/>
<dbReference type="UniPathway" id="UPA00034">
    <property type="reaction ID" value="UER00017"/>
</dbReference>
<dbReference type="Proteomes" id="UP000000586">
    <property type="component" value="Chromosome"/>
</dbReference>
<dbReference type="GO" id="GO:0005829">
    <property type="term" value="C:cytosol"/>
    <property type="evidence" value="ECO:0000318"/>
    <property type="project" value="GO_Central"/>
</dbReference>
<dbReference type="GO" id="GO:0008840">
    <property type="term" value="F:4-hydroxy-tetrahydrodipicolinate synthase activity"/>
    <property type="evidence" value="ECO:0000318"/>
    <property type="project" value="GO_Central"/>
</dbReference>
<dbReference type="GO" id="GO:0019877">
    <property type="term" value="P:diaminopimelate biosynthetic process"/>
    <property type="evidence" value="ECO:0007669"/>
    <property type="project" value="UniProtKB-UniRule"/>
</dbReference>
<dbReference type="GO" id="GO:0009089">
    <property type="term" value="P:lysine biosynthetic process via diaminopimelate"/>
    <property type="evidence" value="ECO:0007669"/>
    <property type="project" value="UniProtKB-UniRule"/>
</dbReference>
<dbReference type="CDD" id="cd00950">
    <property type="entry name" value="DHDPS"/>
    <property type="match status" value="1"/>
</dbReference>
<dbReference type="Gene3D" id="3.20.20.70">
    <property type="entry name" value="Aldolase class I"/>
    <property type="match status" value="1"/>
</dbReference>
<dbReference type="HAMAP" id="MF_00418">
    <property type="entry name" value="DapA"/>
    <property type="match status" value="1"/>
</dbReference>
<dbReference type="InterPro" id="IPR013785">
    <property type="entry name" value="Aldolase_TIM"/>
</dbReference>
<dbReference type="InterPro" id="IPR005263">
    <property type="entry name" value="DapA"/>
</dbReference>
<dbReference type="InterPro" id="IPR002220">
    <property type="entry name" value="DapA-like"/>
</dbReference>
<dbReference type="InterPro" id="IPR020625">
    <property type="entry name" value="Schiff_base-form_aldolases_AS"/>
</dbReference>
<dbReference type="NCBIfam" id="TIGR00674">
    <property type="entry name" value="dapA"/>
    <property type="match status" value="1"/>
</dbReference>
<dbReference type="PANTHER" id="PTHR12128:SF66">
    <property type="entry name" value="4-HYDROXY-2-OXOGLUTARATE ALDOLASE, MITOCHONDRIAL"/>
    <property type="match status" value="1"/>
</dbReference>
<dbReference type="PANTHER" id="PTHR12128">
    <property type="entry name" value="DIHYDRODIPICOLINATE SYNTHASE"/>
    <property type="match status" value="1"/>
</dbReference>
<dbReference type="Pfam" id="PF00701">
    <property type="entry name" value="DHDPS"/>
    <property type="match status" value="1"/>
</dbReference>
<dbReference type="PIRSF" id="PIRSF001365">
    <property type="entry name" value="DHDPS"/>
    <property type="match status" value="1"/>
</dbReference>
<dbReference type="PRINTS" id="PR00146">
    <property type="entry name" value="DHPICSNTHASE"/>
</dbReference>
<dbReference type="SMART" id="SM01130">
    <property type="entry name" value="DHDPS"/>
    <property type="match status" value="1"/>
</dbReference>
<dbReference type="SUPFAM" id="SSF51569">
    <property type="entry name" value="Aldolase"/>
    <property type="match status" value="1"/>
</dbReference>
<dbReference type="PROSITE" id="PS00666">
    <property type="entry name" value="DHDPS_2"/>
    <property type="match status" value="1"/>
</dbReference>
<gene>
    <name evidence="1" type="primary">dapA</name>
    <name type="ordered locus">spr0919</name>
</gene>
<name>DAPA_STRR6</name>
<evidence type="ECO:0000255" key="1">
    <source>
        <dbReference type="HAMAP-Rule" id="MF_00418"/>
    </source>
</evidence>
<evidence type="ECO:0000305" key="2"/>
<reference key="1">
    <citation type="journal article" date="2001" name="J. Bacteriol.">
        <title>Genome of the bacterium Streptococcus pneumoniae strain R6.</title>
        <authorList>
            <person name="Hoskins J."/>
            <person name="Alborn W.E. Jr."/>
            <person name="Arnold J."/>
            <person name="Blaszczak L.C."/>
            <person name="Burgett S."/>
            <person name="DeHoff B.S."/>
            <person name="Estrem S.T."/>
            <person name="Fritz L."/>
            <person name="Fu D.-J."/>
            <person name="Fuller W."/>
            <person name="Geringer C."/>
            <person name="Gilmour R."/>
            <person name="Glass J.S."/>
            <person name="Khoja H."/>
            <person name="Kraft A.R."/>
            <person name="Lagace R.E."/>
            <person name="LeBlanc D.J."/>
            <person name="Lee L.N."/>
            <person name="Lefkowitz E.J."/>
            <person name="Lu J."/>
            <person name="Matsushima P."/>
            <person name="McAhren S.M."/>
            <person name="McHenney M."/>
            <person name="McLeaster K."/>
            <person name="Mundy C.W."/>
            <person name="Nicas T.I."/>
            <person name="Norris F.H."/>
            <person name="O'Gara M."/>
            <person name="Peery R.B."/>
            <person name="Robertson G.T."/>
            <person name="Rockey P."/>
            <person name="Sun P.-M."/>
            <person name="Winkler M.E."/>
            <person name="Yang Y."/>
            <person name="Young-Bellido M."/>
            <person name="Zhao G."/>
            <person name="Zook C.A."/>
            <person name="Baltz R.H."/>
            <person name="Jaskunas S.R."/>
            <person name="Rosteck P.R. Jr."/>
            <person name="Skatrud P.L."/>
            <person name="Glass J.I."/>
        </authorList>
    </citation>
    <scope>NUCLEOTIDE SEQUENCE [LARGE SCALE GENOMIC DNA]</scope>
    <source>
        <strain>ATCC BAA-255 / R6</strain>
    </source>
</reference>
<keyword id="KW-0028">Amino-acid biosynthesis</keyword>
<keyword id="KW-0963">Cytoplasm</keyword>
<keyword id="KW-0220">Diaminopimelate biosynthesis</keyword>
<keyword id="KW-0456">Lyase</keyword>
<keyword id="KW-0457">Lysine biosynthesis</keyword>
<keyword id="KW-1185">Reference proteome</keyword>
<keyword id="KW-0704">Schiff base</keyword>
<comment type="function">
    <text evidence="1">Catalyzes the condensation of (S)-aspartate-beta-semialdehyde [(S)-ASA] and pyruvate to 4-hydroxy-tetrahydrodipicolinate (HTPA).</text>
</comment>
<comment type="catalytic activity">
    <reaction evidence="1">
        <text>L-aspartate 4-semialdehyde + pyruvate = (2S,4S)-4-hydroxy-2,3,4,5-tetrahydrodipicolinate + H2O + H(+)</text>
        <dbReference type="Rhea" id="RHEA:34171"/>
        <dbReference type="ChEBI" id="CHEBI:15361"/>
        <dbReference type="ChEBI" id="CHEBI:15377"/>
        <dbReference type="ChEBI" id="CHEBI:15378"/>
        <dbReference type="ChEBI" id="CHEBI:67139"/>
        <dbReference type="ChEBI" id="CHEBI:537519"/>
        <dbReference type="EC" id="4.3.3.7"/>
    </reaction>
</comment>
<comment type="pathway">
    <text evidence="1">Amino-acid biosynthesis; L-lysine biosynthesis via DAP pathway; (S)-tetrahydrodipicolinate from L-aspartate: step 3/4.</text>
</comment>
<comment type="subunit">
    <text evidence="1">Homotetramer; dimer of dimers.</text>
</comment>
<comment type="subcellular location">
    <subcellularLocation>
        <location evidence="1">Cytoplasm</location>
    </subcellularLocation>
</comment>
<comment type="similarity">
    <text evidence="1">Belongs to the DapA family.</text>
</comment>
<comment type="caution">
    <text evidence="2">Was originally thought to be a dihydrodipicolinate synthase (DHDPS), catalyzing the condensation of (S)-aspartate-beta-semialdehyde [(S)-ASA] and pyruvate to dihydrodipicolinate (DHDP). However, it was shown in E.coli that the product of the enzymatic reaction is not dihydrodipicolinate but in fact (4S)-4-hydroxy-2,3,4,5-tetrahydro-(2S)-dipicolinic acid (HTPA), and that the consecutive dehydration reaction leading to DHDP is not spontaneous but catalyzed by DapB.</text>
</comment>
<feature type="chain" id="PRO_0000103169" description="4-hydroxy-tetrahydrodipicolinate synthase">
    <location>
        <begin position="1"/>
        <end position="311"/>
    </location>
</feature>
<feature type="active site" description="Proton donor/acceptor" evidence="1">
    <location>
        <position position="140"/>
    </location>
</feature>
<feature type="active site" description="Schiff-base intermediate with substrate" evidence="1">
    <location>
        <position position="168"/>
    </location>
</feature>
<feature type="binding site" evidence="1">
    <location>
        <position position="51"/>
    </location>
    <ligand>
        <name>pyruvate</name>
        <dbReference type="ChEBI" id="CHEBI:15361"/>
    </ligand>
</feature>
<feature type="binding site" evidence="1">
    <location>
        <position position="209"/>
    </location>
    <ligand>
        <name>pyruvate</name>
        <dbReference type="ChEBI" id="CHEBI:15361"/>
    </ligand>
</feature>
<feature type="site" description="Part of a proton relay during catalysis" evidence="1">
    <location>
        <position position="50"/>
    </location>
</feature>
<feature type="site" description="Part of a proton relay during catalysis" evidence="1">
    <location>
        <position position="114"/>
    </location>
</feature>